<organism>
    <name type="scientific">Coprothermobacter proteolyticus (strain ATCC 35245 / DSM 5265 / OCM 4 / BT)</name>
    <dbReference type="NCBI Taxonomy" id="309798"/>
    <lineage>
        <taxon>Bacteria</taxon>
        <taxon>Pseudomonadati</taxon>
        <taxon>Coprothermobacterota</taxon>
        <taxon>Coprothermobacteria</taxon>
        <taxon>Coprothermobacterales</taxon>
        <taxon>Coprothermobacteraceae</taxon>
        <taxon>Coprothermobacter</taxon>
    </lineage>
</organism>
<reference key="1">
    <citation type="submission" date="2008-08" db="EMBL/GenBank/DDBJ databases">
        <title>The complete genome sequence of Coprothermobacter proteolyticus strain ATCC 5245 / DSM 5265 / BT.</title>
        <authorList>
            <person name="Dodson R.J."/>
            <person name="Durkin A.S."/>
            <person name="Wu M."/>
            <person name="Eisen J."/>
            <person name="Sutton G."/>
        </authorList>
    </citation>
    <scope>NUCLEOTIDE SEQUENCE [LARGE SCALE GENOMIC DNA]</scope>
    <source>
        <strain>ATCC 35245 / DSM 5265 / OCM 4 / BT</strain>
    </source>
</reference>
<feature type="chain" id="PRO_1000097388" description="Thymidylate kinase">
    <location>
        <begin position="1"/>
        <end position="193"/>
    </location>
</feature>
<feature type="binding site" evidence="1">
    <location>
        <begin position="7"/>
        <end position="14"/>
    </location>
    <ligand>
        <name>ATP</name>
        <dbReference type="ChEBI" id="CHEBI:30616"/>
    </ligand>
</feature>
<dbReference type="EC" id="2.7.4.9" evidence="1"/>
<dbReference type="EMBL" id="CP001145">
    <property type="protein sequence ID" value="ACI17900.1"/>
    <property type="molecule type" value="Genomic_DNA"/>
</dbReference>
<dbReference type="RefSeq" id="WP_012544551.1">
    <property type="nucleotide sequence ID" value="NC_011295.1"/>
</dbReference>
<dbReference type="SMR" id="B5Y7S6"/>
<dbReference type="STRING" id="309798.COPRO5265_0461"/>
<dbReference type="KEGG" id="cpo:COPRO5265_0461"/>
<dbReference type="eggNOG" id="COG0125">
    <property type="taxonomic scope" value="Bacteria"/>
</dbReference>
<dbReference type="HOGENOM" id="CLU_049131_0_1_9"/>
<dbReference type="OrthoDB" id="9774907at2"/>
<dbReference type="Proteomes" id="UP000001732">
    <property type="component" value="Chromosome"/>
</dbReference>
<dbReference type="GO" id="GO:0005829">
    <property type="term" value="C:cytosol"/>
    <property type="evidence" value="ECO:0007669"/>
    <property type="project" value="TreeGrafter"/>
</dbReference>
<dbReference type="GO" id="GO:0005524">
    <property type="term" value="F:ATP binding"/>
    <property type="evidence" value="ECO:0007669"/>
    <property type="project" value="UniProtKB-UniRule"/>
</dbReference>
<dbReference type="GO" id="GO:0004798">
    <property type="term" value="F:dTMP kinase activity"/>
    <property type="evidence" value="ECO:0007669"/>
    <property type="project" value="UniProtKB-UniRule"/>
</dbReference>
<dbReference type="GO" id="GO:0006233">
    <property type="term" value="P:dTDP biosynthetic process"/>
    <property type="evidence" value="ECO:0007669"/>
    <property type="project" value="InterPro"/>
</dbReference>
<dbReference type="GO" id="GO:0006235">
    <property type="term" value="P:dTTP biosynthetic process"/>
    <property type="evidence" value="ECO:0007669"/>
    <property type="project" value="UniProtKB-UniRule"/>
</dbReference>
<dbReference type="GO" id="GO:0006227">
    <property type="term" value="P:dUDP biosynthetic process"/>
    <property type="evidence" value="ECO:0007669"/>
    <property type="project" value="TreeGrafter"/>
</dbReference>
<dbReference type="CDD" id="cd01672">
    <property type="entry name" value="TMPK"/>
    <property type="match status" value="1"/>
</dbReference>
<dbReference type="FunFam" id="3.40.50.300:FF:000225">
    <property type="entry name" value="Thymidylate kinase"/>
    <property type="match status" value="1"/>
</dbReference>
<dbReference type="Gene3D" id="3.40.50.300">
    <property type="entry name" value="P-loop containing nucleotide triphosphate hydrolases"/>
    <property type="match status" value="1"/>
</dbReference>
<dbReference type="HAMAP" id="MF_00165">
    <property type="entry name" value="Thymidylate_kinase"/>
    <property type="match status" value="1"/>
</dbReference>
<dbReference type="InterPro" id="IPR027417">
    <property type="entry name" value="P-loop_NTPase"/>
</dbReference>
<dbReference type="InterPro" id="IPR039430">
    <property type="entry name" value="Thymidylate_kin-like_dom"/>
</dbReference>
<dbReference type="InterPro" id="IPR018095">
    <property type="entry name" value="Thymidylate_kin_CS"/>
</dbReference>
<dbReference type="InterPro" id="IPR018094">
    <property type="entry name" value="Thymidylate_kinase"/>
</dbReference>
<dbReference type="NCBIfam" id="TIGR00041">
    <property type="entry name" value="DTMP_kinase"/>
    <property type="match status" value="1"/>
</dbReference>
<dbReference type="PANTHER" id="PTHR10344">
    <property type="entry name" value="THYMIDYLATE KINASE"/>
    <property type="match status" value="1"/>
</dbReference>
<dbReference type="PANTHER" id="PTHR10344:SF4">
    <property type="entry name" value="UMP-CMP KINASE 2, MITOCHONDRIAL"/>
    <property type="match status" value="1"/>
</dbReference>
<dbReference type="Pfam" id="PF02223">
    <property type="entry name" value="Thymidylate_kin"/>
    <property type="match status" value="1"/>
</dbReference>
<dbReference type="SUPFAM" id="SSF52540">
    <property type="entry name" value="P-loop containing nucleoside triphosphate hydrolases"/>
    <property type="match status" value="1"/>
</dbReference>
<dbReference type="PROSITE" id="PS01331">
    <property type="entry name" value="THYMIDYLATE_KINASE"/>
    <property type="match status" value="1"/>
</dbReference>
<comment type="function">
    <text evidence="1">Phosphorylation of dTMP to form dTDP in both de novo and salvage pathways of dTTP synthesis.</text>
</comment>
<comment type="catalytic activity">
    <reaction evidence="1">
        <text>dTMP + ATP = dTDP + ADP</text>
        <dbReference type="Rhea" id="RHEA:13517"/>
        <dbReference type="ChEBI" id="CHEBI:30616"/>
        <dbReference type="ChEBI" id="CHEBI:58369"/>
        <dbReference type="ChEBI" id="CHEBI:63528"/>
        <dbReference type="ChEBI" id="CHEBI:456216"/>
        <dbReference type="EC" id="2.7.4.9"/>
    </reaction>
</comment>
<comment type="similarity">
    <text evidence="1">Belongs to the thymidylate kinase family.</text>
</comment>
<gene>
    <name evidence="1" type="primary">tmk</name>
    <name type="ordered locus">COPRO5265_0461</name>
</gene>
<evidence type="ECO:0000255" key="1">
    <source>
        <dbReference type="HAMAP-Rule" id="MF_00165"/>
    </source>
</evidence>
<name>KTHY_COPPD</name>
<keyword id="KW-0067">ATP-binding</keyword>
<keyword id="KW-0418">Kinase</keyword>
<keyword id="KW-0545">Nucleotide biosynthesis</keyword>
<keyword id="KW-0547">Nucleotide-binding</keyword>
<keyword id="KW-1185">Reference proteome</keyword>
<keyword id="KW-0808">Transferase</keyword>
<protein>
    <recommendedName>
        <fullName evidence="1">Thymidylate kinase</fullName>
        <ecNumber evidence="1">2.7.4.9</ecNumber>
    </recommendedName>
    <alternativeName>
        <fullName evidence="1">dTMP kinase</fullName>
    </alternativeName>
</protein>
<proteinExistence type="inferred from homology"/>
<accession>B5Y7S6</accession>
<sequence>MFIVVEGIDGCGKSTVASLLAAEIGKKRPVFHTFEPGHVRDGLYRELIMENVDNPFVVAALFTIDRAEHVKKMIKPALAKGEWVVCERYADSTLAYQGYGMGLDKELINRMNEEAIDGLWPDKIFYLDIEPHLALARLQNKEKDALEGQGLEFLQRVREGYEEIARTRGYIYMDATLPPEIIVKRILEEVKLQ</sequence>